<feature type="chain" id="PRO_0000413117" description="Inosine triphosphate pyrophosphatase">
    <location>
        <begin position="1"/>
        <end position="205"/>
    </location>
</feature>
<feature type="binding site" evidence="1">
    <location>
        <begin position="20"/>
        <end position="25"/>
    </location>
    <ligand>
        <name>ITP</name>
        <dbReference type="ChEBI" id="CHEBI:61402"/>
    </ligand>
</feature>
<feature type="binding site" evidence="1">
    <location>
        <position position="48"/>
    </location>
    <ligand>
        <name>Mg(2+)</name>
        <dbReference type="ChEBI" id="CHEBI:18420"/>
    </ligand>
</feature>
<feature type="binding site" evidence="1">
    <location>
        <position position="60"/>
    </location>
    <ligand>
        <name>ITP</name>
        <dbReference type="ChEBI" id="CHEBI:61402"/>
    </ligand>
</feature>
<feature type="binding site" evidence="1">
    <location>
        <begin position="76"/>
        <end position="77"/>
    </location>
    <ligand>
        <name>ITP</name>
        <dbReference type="ChEBI" id="CHEBI:61402"/>
    </ligand>
</feature>
<feature type="binding site" evidence="1">
    <location>
        <position position="93"/>
    </location>
    <ligand>
        <name>ITP</name>
        <dbReference type="ChEBI" id="CHEBI:61402"/>
    </ligand>
</feature>
<feature type="binding site" evidence="1">
    <location>
        <begin position="152"/>
        <end position="155"/>
    </location>
    <ligand>
        <name>ITP</name>
        <dbReference type="ChEBI" id="CHEBI:61402"/>
    </ligand>
</feature>
<feature type="binding site" evidence="1">
    <location>
        <position position="175"/>
    </location>
    <ligand>
        <name>ITP</name>
        <dbReference type="ChEBI" id="CHEBI:61402"/>
    </ligand>
</feature>
<feature type="binding site" evidence="1">
    <location>
        <begin position="180"/>
        <end position="181"/>
    </location>
    <ligand>
        <name>ITP</name>
        <dbReference type="ChEBI" id="CHEBI:61402"/>
    </ligand>
</feature>
<sequence>MSGAAAAAARALPKAVTFVTGNAKKLEEVRAILGSSIPFQSLKLDLPELQGEPEDISKEKARMAASQVNGPVLVEDTCLCFNALKGLPGPYIKWFLEKTGHEGLNNLLLAYEDKSAFAMCIFSLALGPGEEPMTFVGKTAGKIVPARGPADFGWDPVFQPDGFDQTYAEMPKSVKNQISHRGKALALVKEHFAAANYKVQNDGSA</sequence>
<gene>
    <name type="ordered locus">Os10g0457500</name>
    <name type="ordered locus">LOC_Os10g31940</name>
    <name type="ORF">OsJ_31777</name>
</gene>
<protein>
    <recommendedName>
        <fullName evidence="1">Inosine triphosphate pyrophosphatase</fullName>
        <shortName evidence="1">ITPase</shortName>
        <shortName evidence="1">Inosine triphosphatase</shortName>
        <ecNumber evidence="1">3.6.1.66</ecNumber>
    </recommendedName>
    <alternativeName>
        <fullName evidence="1">Non-canonical purine NTP pyrophosphatase</fullName>
    </alternativeName>
    <alternativeName>
        <fullName evidence="1">Non-standard purine NTP pyrophosphatase</fullName>
    </alternativeName>
    <alternativeName>
        <fullName evidence="1">Nucleoside-triphosphate diphosphatase</fullName>
    </alternativeName>
    <alternativeName>
        <fullName evidence="1">Nucleoside-triphosphate pyrophosphatase</fullName>
        <shortName evidence="1">NTPase</shortName>
    </alternativeName>
    <alternativeName>
        <fullName evidence="1">XTP/dITP diphosphatase</fullName>
    </alternativeName>
</protein>
<comment type="function">
    <text evidence="1">Pyrophosphatase that hydrolyzes non-canonical purine nucleotides such as inosine triphosphate (ITP), deoxyinosine triphosphate (dITP) or xanthosine 5'-triphosphate (XTP) to their respective monophosphate derivatives. The enzyme does not distinguish between the deoxy- and ribose forms. Probably excludes non-canonical purines from RNA and DNA precursor pools, thus preventing their incorporation into RNA and DNA and avoiding chromosomal lesions.</text>
</comment>
<comment type="catalytic activity">
    <reaction evidence="1">
        <text>ITP + H2O = IMP + diphosphate + H(+)</text>
        <dbReference type="Rhea" id="RHEA:29399"/>
        <dbReference type="ChEBI" id="CHEBI:15377"/>
        <dbReference type="ChEBI" id="CHEBI:15378"/>
        <dbReference type="ChEBI" id="CHEBI:33019"/>
        <dbReference type="ChEBI" id="CHEBI:58053"/>
        <dbReference type="ChEBI" id="CHEBI:61402"/>
        <dbReference type="EC" id="3.6.1.66"/>
    </reaction>
    <physiologicalReaction direction="left-to-right" evidence="1">
        <dbReference type="Rhea" id="RHEA:29400"/>
    </physiologicalReaction>
</comment>
<comment type="catalytic activity">
    <reaction evidence="1">
        <text>dITP + H2O = dIMP + diphosphate + H(+)</text>
        <dbReference type="Rhea" id="RHEA:28342"/>
        <dbReference type="ChEBI" id="CHEBI:15377"/>
        <dbReference type="ChEBI" id="CHEBI:15378"/>
        <dbReference type="ChEBI" id="CHEBI:33019"/>
        <dbReference type="ChEBI" id="CHEBI:61194"/>
        <dbReference type="ChEBI" id="CHEBI:61382"/>
        <dbReference type="EC" id="3.6.1.66"/>
    </reaction>
    <physiologicalReaction direction="left-to-right" evidence="1">
        <dbReference type="Rhea" id="RHEA:28343"/>
    </physiologicalReaction>
</comment>
<comment type="catalytic activity">
    <reaction evidence="1">
        <text>XTP + H2O = XMP + diphosphate + H(+)</text>
        <dbReference type="Rhea" id="RHEA:28610"/>
        <dbReference type="ChEBI" id="CHEBI:15377"/>
        <dbReference type="ChEBI" id="CHEBI:15378"/>
        <dbReference type="ChEBI" id="CHEBI:33019"/>
        <dbReference type="ChEBI" id="CHEBI:57464"/>
        <dbReference type="ChEBI" id="CHEBI:61314"/>
        <dbReference type="EC" id="3.6.1.66"/>
    </reaction>
    <physiologicalReaction direction="left-to-right" evidence="1">
        <dbReference type="Rhea" id="RHEA:28611"/>
    </physiologicalReaction>
</comment>
<comment type="cofactor">
    <cofactor evidence="1">
        <name>Mg(2+)</name>
        <dbReference type="ChEBI" id="CHEBI:18420"/>
    </cofactor>
    <cofactor evidence="1">
        <name>Mn(2+)</name>
        <dbReference type="ChEBI" id="CHEBI:29035"/>
    </cofactor>
    <text evidence="1">Binds 1 divalent metal cation per subunit; can use either Mg(2+) or Mn(2+).</text>
</comment>
<comment type="subunit">
    <text evidence="1">Homodimer.</text>
</comment>
<comment type="subcellular location">
    <subcellularLocation>
        <location evidence="1">Cytoplasm</location>
    </subcellularLocation>
</comment>
<comment type="similarity">
    <text evidence="1">Belongs to the HAM1 NTPase family.</text>
</comment>
<evidence type="ECO:0000255" key="1">
    <source>
        <dbReference type="HAMAP-Rule" id="MF_03148"/>
    </source>
</evidence>
<organism>
    <name type="scientific">Oryza sativa subsp. japonica</name>
    <name type="common">Rice</name>
    <dbReference type="NCBI Taxonomy" id="39947"/>
    <lineage>
        <taxon>Eukaryota</taxon>
        <taxon>Viridiplantae</taxon>
        <taxon>Streptophyta</taxon>
        <taxon>Embryophyta</taxon>
        <taxon>Tracheophyta</taxon>
        <taxon>Spermatophyta</taxon>
        <taxon>Magnoliopsida</taxon>
        <taxon>Liliopsida</taxon>
        <taxon>Poales</taxon>
        <taxon>Poaceae</taxon>
        <taxon>BOP clade</taxon>
        <taxon>Oryzoideae</taxon>
        <taxon>Oryzeae</taxon>
        <taxon>Oryzinae</taxon>
        <taxon>Oryza</taxon>
        <taxon>Oryza sativa</taxon>
    </lineage>
</organism>
<accession>Q7XDP2</accession>
<accession>A0A0P0XVD2</accession>
<proteinExistence type="evidence at transcript level"/>
<name>ITPA_ORYSJ</name>
<dbReference type="EC" id="3.6.1.66" evidence="1"/>
<dbReference type="EMBL" id="DP000086">
    <property type="protein sequence ID" value="AAP54099.2"/>
    <property type="molecule type" value="Genomic_DNA"/>
</dbReference>
<dbReference type="EMBL" id="AP008216">
    <property type="protein sequence ID" value="BAF26677.1"/>
    <property type="molecule type" value="Genomic_DNA"/>
</dbReference>
<dbReference type="EMBL" id="AP014966">
    <property type="protein sequence ID" value="BAT11143.1"/>
    <property type="molecule type" value="Genomic_DNA"/>
</dbReference>
<dbReference type="EMBL" id="CM000147">
    <property type="protein sequence ID" value="EEE51079.1"/>
    <property type="molecule type" value="Genomic_DNA"/>
</dbReference>
<dbReference type="EMBL" id="AK059744">
    <property type="protein sequence ID" value="BAG87097.1"/>
    <property type="molecule type" value="mRNA"/>
</dbReference>
<dbReference type="RefSeq" id="XP_015613001.1">
    <property type="nucleotide sequence ID" value="XM_015757515.1"/>
</dbReference>
<dbReference type="SMR" id="Q7XDP2"/>
<dbReference type="FunCoup" id="Q7XDP2">
    <property type="interactions" value="2316"/>
</dbReference>
<dbReference type="STRING" id="39947.Q7XDP2"/>
<dbReference type="PaxDb" id="39947-Q7XDP2"/>
<dbReference type="EnsemblPlants" id="Os10t0457500-01">
    <property type="protein sequence ID" value="Os10t0457500-01"/>
    <property type="gene ID" value="Os10g0457500"/>
</dbReference>
<dbReference type="Gramene" id="Os10t0457500-01">
    <property type="protein sequence ID" value="Os10t0457500-01"/>
    <property type="gene ID" value="Os10g0457500"/>
</dbReference>
<dbReference type="KEGG" id="dosa:Os10g0457500"/>
<dbReference type="eggNOG" id="KOG3222">
    <property type="taxonomic scope" value="Eukaryota"/>
</dbReference>
<dbReference type="HOGENOM" id="CLU_082080_1_1_1"/>
<dbReference type="InParanoid" id="Q7XDP2"/>
<dbReference type="OMA" id="YDPIFQP"/>
<dbReference type="OrthoDB" id="6288734at2759"/>
<dbReference type="Proteomes" id="UP000000763">
    <property type="component" value="Chromosome 10"/>
</dbReference>
<dbReference type="Proteomes" id="UP000007752">
    <property type="component" value="Chromosome 10"/>
</dbReference>
<dbReference type="Proteomes" id="UP000059680">
    <property type="component" value="Chromosome 10"/>
</dbReference>
<dbReference type="GO" id="GO:0005737">
    <property type="term" value="C:cytoplasm"/>
    <property type="evidence" value="ECO:0000318"/>
    <property type="project" value="GO_Central"/>
</dbReference>
<dbReference type="GO" id="GO:0035870">
    <property type="term" value="F:dITP diphosphatase activity"/>
    <property type="evidence" value="ECO:0007669"/>
    <property type="project" value="RHEA"/>
</dbReference>
<dbReference type="GO" id="GO:0036220">
    <property type="term" value="F:ITP diphosphatase activity"/>
    <property type="evidence" value="ECO:0007669"/>
    <property type="project" value="RHEA"/>
</dbReference>
<dbReference type="GO" id="GO:0046872">
    <property type="term" value="F:metal ion binding"/>
    <property type="evidence" value="ECO:0007669"/>
    <property type="project" value="UniProtKB-KW"/>
</dbReference>
<dbReference type="GO" id="GO:0047429">
    <property type="term" value="F:nucleoside triphosphate diphosphatase activity"/>
    <property type="evidence" value="ECO:0000318"/>
    <property type="project" value="GO_Central"/>
</dbReference>
<dbReference type="GO" id="GO:0000166">
    <property type="term" value="F:nucleotide binding"/>
    <property type="evidence" value="ECO:0007669"/>
    <property type="project" value="UniProtKB-KW"/>
</dbReference>
<dbReference type="GO" id="GO:0036222">
    <property type="term" value="F:XTP diphosphatase activity"/>
    <property type="evidence" value="ECO:0007669"/>
    <property type="project" value="RHEA"/>
</dbReference>
<dbReference type="GO" id="GO:0009204">
    <property type="term" value="P:deoxyribonucleoside triphosphate catabolic process"/>
    <property type="evidence" value="ECO:0007669"/>
    <property type="project" value="UniProtKB-UniRule"/>
</dbReference>
<dbReference type="GO" id="GO:0009143">
    <property type="term" value="P:nucleoside triphosphate catabolic process"/>
    <property type="evidence" value="ECO:0000318"/>
    <property type="project" value="GO_Central"/>
</dbReference>
<dbReference type="GO" id="GO:0009117">
    <property type="term" value="P:nucleotide metabolic process"/>
    <property type="evidence" value="ECO:0007669"/>
    <property type="project" value="UniProtKB-KW"/>
</dbReference>
<dbReference type="CDD" id="cd00515">
    <property type="entry name" value="HAM1"/>
    <property type="match status" value="1"/>
</dbReference>
<dbReference type="FunFam" id="3.90.950.10:FF:000003">
    <property type="entry name" value="Inosine triphosphate pyrophosphatase"/>
    <property type="match status" value="1"/>
</dbReference>
<dbReference type="Gene3D" id="3.90.950.10">
    <property type="match status" value="1"/>
</dbReference>
<dbReference type="HAMAP" id="MF_03148">
    <property type="entry name" value="HAM1_NTPase"/>
    <property type="match status" value="1"/>
</dbReference>
<dbReference type="InterPro" id="IPR027502">
    <property type="entry name" value="ITPase"/>
</dbReference>
<dbReference type="InterPro" id="IPR029001">
    <property type="entry name" value="ITPase-like_fam"/>
</dbReference>
<dbReference type="InterPro" id="IPR002637">
    <property type="entry name" value="RdgB/HAM1"/>
</dbReference>
<dbReference type="PANTHER" id="PTHR11067:SF9">
    <property type="entry name" value="INOSINE TRIPHOSPHATE PYROPHOSPHATASE"/>
    <property type="match status" value="1"/>
</dbReference>
<dbReference type="PANTHER" id="PTHR11067">
    <property type="entry name" value="INOSINE TRIPHOSPHATE PYROPHOSPHATASE/HAM1 PROTEIN"/>
    <property type="match status" value="1"/>
</dbReference>
<dbReference type="Pfam" id="PF01725">
    <property type="entry name" value="Ham1p_like"/>
    <property type="match status" value="1"/>
</dbReference>
<dbReference type="SUPFAM" id="SSF52972">
    <property type="entry name" value="ITPase-like"/>
    <property type="match status" value="1"/>
</dbReference>
<reference key="1">
    <citation type="journal article" date="2003" name="Science">
        <title>In-depth view of structure, activity, and evolution of rice chromosome 10.</title>
        <authorList>
            <person name="Yu Y."/>
            <person name="Rambo T."/>
            <person name="Currie J."/>
            <person name="Saski C."/>
            <person name="Kim H.-R."/>
            <person name="Collura K."/>
            <person name="Thompson S."/>
            <person name="Simmons J."/>
            <person name="Yang T.-J."/>
            <person name="Nah G."/>
            <person name="Patel A.J."/>
            <person name="Thurmond S."/>
            <person name="Henry D."/>
            <person name="Oates R."/>
            <person name="Palmer M."/>
            <person name="Pries G."/>
            <person name="Gibson J."/>
            <person name="Anderson H."/>
            <person name="Paradkar M."/>
            <person name="Crane L."/>
            <person name="Dale J."/>
            <person name="Carver M.B."/>
            <person name="Wood T."/>
            <person name="Frisch D."/>
            <person name="Engler F."/>
            <person name="Soderlund C."/>
            <person name="Palmer L.E."/>
            <person name="Teytelman L."/>
            <person name="Nascimento L."/>
            <person name="De la Bastide M."/>
            <person name="Spiegel L."/>
            <person name="Ware D."/>
            <person name="O'Shaughnessy A."/>
            <person name="Dike S."/>
            <person name="Dedhia N."/>
            <person name="Preston R."/>
            <person name="Huang E."/>
            <person name="Ferraro K."/>
            <person name="Kuit K."/>
            <person name="Miller B."/>
            <person name="Zutavern T."/>
            <person name="Katzenberger F."/>
            <person name="Muller S."/>
            <person name="Balija V."/>
            <person name="Martienssen R.A."/>
            <person name="Stein L."/>
            <person name="Minx P."/>
            <person name="Johnson D."/>
            <person name="Cordum H."/>
            <person name="Mardis E."/>
            <person name="Cheng Z."/>
            <person name="Jiang J."/>
            <person name="Wilson R."/>
            <person name="McCombie W.R."/>
            <person name="Wing R.A."/>
            <person name="Yuan Q."/>
            <person name="Ouyang S."/>
            <person name="Liu J."/>
            <person name="Jones K.M."/>
            <person name="Gansberger K."/>
            <person name="Moffat K."/>
            <person name="Hill J."/>
            <person name="Tsitrin T."/>
            <person name="Overton L."/>
            <person name="Bera J."/>
            <person name="Kim M."/>
            <person name="Jin S."/>
            <person name="Tallon L."/>
            <person name="Ciecko A."/>
            <person name="Pai G."/>
            <person name="Van Aken S."/>
            <person name="Utterback T."/>
            <person name="Reidmuller S."/>
            <person name="Bormann J."/>
            <person name="Feldblyum T."/>
            <person name="Hsiao J."/>
            <person name="Zismann V."/>
            <person name="Blunt S."/>
            <person name="de Vazeille A.R."/>
            <person name="Shaffer T."/>
            <person name="Koo H."/>
            <person name="Suh B."/>
            <person name="Yang Q."/>
            <person name="Haas B."/>
            <person name="Peterson J."/>
            <person name="Pertea M."/>
            <person name="Volfovsky N."/>
            <person name="Wortman J."/>
            <person name="White O."/>
            <person name="Salzberg S.L."/>
            <person name="Fraser C.M."/>
            <person name="Buell C.R."/>
            <person name="Messing J."/>
            <person name="Song R."/>
            <person name="Fuks G."/>
            <person name="Llaca V."/>
            <person name="Kovchak S."/>
            <person name="Young S."/>
            <person name="Bowers J.E."/>
            <person name="Paterson A.H."/>
            <person name="Johns M.A."/>
            <person name="Mao L."/>
            <person name="Pan H."/>
            <person name="Dean R.A."/>
        </authorList>
    </citation>
    <scope>NUCLEOTIDE SEQUENCE [LARGE SCALE GENOMIC DNA]</scope>
    <source>
        <strain>cv. Nipponbare</strain>
    </source>
</reference>
<reference key="2">
    <citation type="journal article" date="2005" name="Nature">
        <title>The map-based sequence of the rice genome.</title>
        <authorList>
            <consortium name="International rice genome sequencing project (IRGSP)"/>
        </authorList>
    </citation>
    <scope>NUCLEOTIDE SEQUENCE [LARGE SCALE GENOMIC DNA]</scope>
    <source>
        <strain>cv. Nipponbare</strain>
    </source>
</reference>
<reference key="3">
    <citation type="journal article" date="2008" name="Nucleic Acids Res.">
        <title>The rice annotation project database (RAP-DB): 2008 update.</title>
        <authorList>
            <consortium name="The rice annotation project (RAP)"/>
        </authorList>
    </citation>
    <scope>GENOME REANNOTATION</scope>
    <source>
        <strain>cv. Nipponbare</strain>
    </source>
</reference>
<reference key="4">
    <citation type="journal article" date="2013" name="Rice">
        <title>Improvement of the Oryza sativa Nipponbare reference genome using next generation sequence and optical map data.</title>
        <authorList>
            <person name="Kawahara Y."/>
            <person name="de la Bastide M."/>
            <person name="Hamilton J.P."/>
            <person name="Kanamori H."/>
            <person name="McCombie W.R."/>
            <person name="Ouyang S."/>
            <person name="Schwartz D.C."/>
            <person name="Tanaka T."/>
            <person name="Wu J."/>
            <person name="Zhou S."/>
            <person name="Childs K.L."/>
            <person name="Davidson R.M."/>
            <person name="Lin H."/>
            <person name="Quesada-Ocampo L."/>
            <person name="Vaillancourt B."/>
            <person name="Sakai H."/>
            <person name="Lee S.S."/>
            <person name="Kim J."/>
            <person name="Numa H."/>
            <person name="Itoh T."/>
            <person name="Buell C.R."/>
            <person name="Matsumoto T."/>
        </authorList>
    </citation>
    <scope>GENOME REANNOTATION</scope>
    <source>
        <strain>cv. Nipponbare</strain>
    </source>
</reference>
<reference key="5">
    <citation type="journal article" date="2005" name="PLoS Biol.">
        <title>The genomes of Oryza sativa: a history of duplications.</title>
        <authorList>
            <person name="Yu J."/>
            <person name="Wang J."/>
            <person name="Lin W."/>
            <person name="Li S."/>
            <person name="Li H."/>
            <person name="Zhou J."/>
            <person name="Ni P."/>
            <person name="Dong W."/>
            <person name="Hu S."/>
            <person name="Zeng C."/>
            <person name="Zhang J."/>
            <person name="Zhang Y."/>
            <person name="Li R."/>
            <person name="Xu Z."/>
            <person name="Li S."/>
            <person name="Li X."/>
            <person name="Zheng H."/>
            <person name="Cong L."/>
            <person name="Lin L."/>
            <person name="Yin J."/>
            <person name="Geng J."/>
            <person name="Li G."/>
            <person name="Shi J."/>
            <person name="Liu J."/>
            <person name="Lv H."/>
            <person name="Li J."/>
            <person name="Wang J."/>
            <person name="Deng Y."/>
            <person name="Ran L."/>
            <person name="Shi X."/>
            <person name="Wang X."/>
            <person name="Wu Q."/>
            <person name="Li C."/>
            <person name="Ren X."/>
            <person name="Wang J."/>
            <person name="Wang X."/>
            <person name="Li D."/>
            <person name="Liu D."/>
            <person name="Zhang X."/>
            <person name="Ji Z."/>
            <person name="Zhao W."/>
            <person name="Sun Y."/>
            <person name="Zhang Z."/>
            <person name="Bao J."/>
            <person name="Han Y."/>
            <person name="Dong L."/>
            <person name="Ji J."/>
            <person name="Chen P."/>
            <person name="Wu S."/>
            <person name="Liu J."/>
            <person name="Xiao Y."/>
            <person name="Bu D."/>
            <person name="Tan J."/>
            <person name="Yang L."/>
            <person name="Ye C."/>
            <person name="Zhang J."/>
            <person name="Xu J."/>
            <person name="Zhou Y."/>
            <person name="Yu Y."/>
            <person name="Zhang B."/>
            <person name="Zhuang S."/>
            <person name="Wei H."/>
            <person name="Liu B."/>
            <person name="Lei M."/>
            <person name="Yu H."/>
            <person name="Li Y."/>
            <person name="Xu H."/>
            <person name="Wei S."/>
            <person name="He X."/>
            <person name="Fang L."/>
            <person name="Zhang Z."/>
            <person name="Zhang Y."/>
            <person name="Huang X."/>
            <person name="Su Z."/>
            <person name="Tong W."/>
            <person name="Li J."/>
            <person name="Tong Z."/>
            <person name="Li S."/>
            <person name="Ye J."/>
            <person name="Wang L."/>
            <person name="Fang L."/>
            <person name="Lei T."/>
            <person name="Chen C.-S."/>
            <person name="Chen H.-C."/>
            <person name="Xu Z."/>
            <person name="Li H."/>
            <person name="Huang H."/>
            <person name="Zhang F."/>
            <person name="Xu H."/>
            <person name="Li N."/>
            <person name="Zhao C."/>
            <person name="Li S."/>
            <person name="Dong L."/>
            <person name="Huang Y."/>
            <person name="Li L."/>
            <person name="Xi Y."/>
            <person name="Qi Q."/>
            <person name="Li W."/>
            <person name="Zhang B."/>
            <person name="Hu W."/>
            <person name="Zhang Y."/>
            <person name="Tian X."/>
            <person name="Jiao Y."/>
            <person name="Liang X."/>
            <person name="Jin J."/>
            <person name="Gao L."/>
            <person name="Zheng W."/>
            <person name="Hao B."/>
            <person name="Liu S.-M."/>
            <person name="Wang W."/>
            <person name="Yuan L."/>
            <person name="Cao M."/>
            <person name="McDermott J."/>
            <person name="Samudrala R."/>
            <person name="Wang J."/>
            <person name="Wong G.K.-S."/>
            <person name="Yang H."/>
        </authorList>
    </citation>
    <scope>NUCLEOTIDE SEQUENCE [LARGE SCALE GENOMIC DNA]</scope>
    <source>
        <strain>cv. Nipponbare</strain>
    </source>
</reference>
<reference key="6">
    <citation type="journal article" date="2003" name="Science">
        <title>Collection, mapping, and annotation of over 28,000 cDNA clones from japonica rice.</title>
        <authorList>
            <consortium name="The rice full-length cDNA consortium"/>
        </authorList>
    </citation>
    <scope>NUCLEOTIDE SEQUENCE [LARGE SCALE MRNA]</scope>
    <source>
        <strain>cv. Nipponbare</strain>
    </source>
</reference>
<keyword id="KW-0963">Cytoplasm</keyword>
<keyword id="KW-0378">Hydrolase</keyword>
<keyword id="KW-0460">Magnesium</keyword>
<keyword id="KW-0464">Manganese</keyword>
<keyword id="KW-0479">Metal-binding</keyword>
<keyword id="KW-0546">Nucleotide metabolism</keyword>
<keyword id="KW-0547">Nucleotide-binding</keyword>
<keyword id="KW-1185">Reference proteome</keyword>